<gene>
    <name evidence="1" type="primary">pdxA</name>
    <name type="ordered locus">Mchl_3930</name>
</gene>
<sequence>MASDDRPLALTLGDPSGIGPEIALAAWQLRSERGVPPFQLIGDPEFLEATAYRLGLSVPVAEVEPDDACEVFPRALPVLPLPSGAKVIATPGAPDSANAGAIVESITAAVDLVRSGAASAVVTNPIAKFVLTRVGFAHPGHTEFLAALAAREGREPSLPVMMIWSDTLAVVPVTIHVALRRVPELLTQDLVERTARIVHADLRARFGLEHPRLVLSGLNPHAGESGTMGTEDRDVLAPAVAVLRSEGIDIRGPLPADTLFHERARATYDVALTPTHDQALIPVKTLAFDEGVNVTLGLPFVRTSPDHGTAFDIAGKGLAKPDSLIAALRLAHRLAHRPADTVLPFPARA</sequence>
<dbReference type="EC" id="1.1.1.262" evidence="1"/>
<dbReference type="EMBL" id="CP001298">
    <property type="protein sequence ID" value="ACK84742.1"/>
    <property type="molecule type" value="Genomic_DNA"/>
</dbReference>
<dbReference type="RefSeq" id="WP_015951921.1">
    <property type="nucleotide sequence ID" value="NC_011757.1"/>
</dbReference>
<dbReference type="SMR" id="B7KYJ1"/>
<dbReference type="KEGG" id="mch:Mchl_3930"/>
<dbReference type="HOGENOM" id="CLU_040168_1_0_5"/>
<dbReference type="UniPathway" id="UPA00244">
    <property type="reaction ID" value="UER00312"/>
</dbReference>
<dbReference type="Proteomes" id="UP000002385">
    <property type="component" value="Chromosome"/>
</dbReference>
<dbReference type="GO" id="GO:0005737">
    <property type="term" value="C:cytoplasm"/>
    <property type="evidence" value="ECO:0007669"/>
    <property type="project" value="UniProtKB-SubCell"/>
</dbReference>
<dbReference type="GO" id="GO:0050570">
    <property type="term" value="F:4-hydroxythreonine-4-phosphate dehydrogenase activity"/>
    <property type="evidence" value="ECO:0007669"/>
    <property type="project" value="UniProtKB-UniRule"/>
</dbReference>
<dbReference type="GO" id="GO:0050897">
    <property type="term" value="F:cobalt ion binding"/>
    <property type="evidence" value="ECO:0007669"/>
    <property type="project" value="UniProtKB-UniRule"/>
</dbReference>
<dbReference type="GO" id="GO:0000287">
    <property type="term" value="F:magnesium ion binding"/>
    <property type="evidence" value="ECO:0007669"/>
    <property type="project" value="UniProtKB-UniRule"/>
</dbReference>
<dbReference type="GO" id="GO:0051287">
    <property type="term" value="F:NAD binding"/>
    <property type="evidence" value="ECO:0007669"/>
    <property type="project" value="InterPro"/>
</dbReference>
<dbReference type="GO" id="GO:0008270">
    <property type="term" value="F:zinc ion binding"/>
    <property type="evidence" value="ECO:0007669"/>
    <property type="project" value="UniProtKB-UniRule"/>
</dbReference>
<dbReference type="GO" id="GO:0042823">
    <property type="term" value="P:pyridoxal phosphate biosynthetic process"/>
    <property type="evidence" value="ECO:0007669"/>
    <property type="project" value="UniProtKB-UniRule"/>
</dbReference>
<dbReference type="GO" id="GO:0008615">
    <property type="term" value="P:pyridoxine biosynthetic process"/>
    <property type="evidence" value="ECO:0007669"/>
    <property type="project" value="UniProtKB-UniRule"/>
</dbReference>
<dbReference type="Gene3D" id="3.40.718.10">
    <property type="entry name" value="Isopropylmalate Dehydrogenase"/>
    <property type="match status" value="1"/>
</dbReference>
<dbReference type="HAMAP" id="MF_00536">
    <property type="entry name" value="PdxA"/>
    <property type="match status" value="1"/>
</dbReference>
<dbReference type="InterPro" id="IPR037510">
    <property type="entry name" value="PdxA"/>
</dbReference>
<dbReference type="InterPro" id="IPR005255">
    <property type="entry name" value="PdxA_fam"/>
</dbReference>
<dbReference type="NCBIfam" id="TIGR00557">
    <property type="entry name" value="pdxA"/>
    <property type="match status" value="1"/>
</dbReference>
<dbReference type="NCBIfam" id="NF003699">
    <property type="entry name" value="PRK05312.1"/>
    <property type="match status" value="1"/>
</dbReference>
<dbReference type="PANTHER" id="PTHR30004">
    <property type="entry name" value="4-HYDROXYTHREONINE-4-PHOSPHATE DEHYDROGENASE"/>
    <property type="match status" value="1"/>
</dbReference>
<dbReference type="PANTHER" id="PTHR30004:SF6">
    <property type="entry name" value="D-THREONATE 4-PHOSPHATE DEHYDROGENASE"/>
    <property type="match status" value="1"/>
</dbReference>
<dbReference type="Pfam" id="PF04166">
    <property type="entry name" value="PdxA"/>
    <property type="match status" value="1"/>
</dbReference>
<dbReference type="SUPFAM" id="SSF53659">
    <property type="entry name" value="Isocitrate/Isopropylmalate dehydrogenase-like"/>
    <property type="match status" value="1"/>
</dbReference>
<reference key="1">
    <citation type="submission" date="2008-12" db="EMBL/GenBank/DDBJ databases">
        <title>Complete sequence of chromosome of Methylobacterium chloromethanicum CM4.</title>
        <authorList>
            <consortium name="US DOE Joint Genome Institute"/>
            <person name="Lucas S."/>
            <person name="Copeland A."/>
            <person name="Lapidus A."/>
            <person name="Glavina del Rio T."/>
            <person name="Dalin E."/>
            <person name="Tice H."/>
            <person name="Bruce D."/>
            <person name="Goodwin L."/>
            <person name="Pitluck S."/>
            <person name="Chertkov O."/>
            <person name="Brettin T."/>
            <person name="Detter J.C."/>
            <person name="Han C."/>
            <person name="Larimer F."/>
            <person name="Land M."/>
            <person name="Hauser L."/>
            <person name="Kyrpides N."/>
            <person name="Mikhailova N."/>
            <person name="Marx C."/>
            <person name="Richardson P."/>
        </authorList>
    </citation>
    <scope>NUCLEOTIDE SEQUENCE [LARGE SCALE GENOMIC DNA]</scope>
    <source>
        <strain>CM4 / NCIMB 13688</strain>
    </source>
</reference>
<evidence type="ECO:0000255" key="1">
    <source>
        <dbReference type="HAMAP-Rule" id="MF_00536"/>
    </source>
</evidence>
<comment type="function">
    <text evidence="1">Catalyzes the NAD(P)-dependent oxidation of 4-(phosphooxy)-L-threonine (HTP) into 2-amino-3-oxo-4-(phosphooxy)butyric acid which spontaneously decarboxylates to form 3-amino-2-oxopropyl phosphate (AHAP).</text>
</comment>
<comment type="catalytic activity">
    <reaction evidence="1">
        <text>4-(phosphooxy)-L-threonine + NAD(+) = 3-amino-2-oxopropyl phosphate + CO2 + NADH</text>
        <dbReference type="Rhea" id="RHEA:32275"/>
        <dbReference type="ChEBI" id="CHEBI:16526"/>
        <dbReference type="ChEBI" id="CHEBI:57279"/>
        <dbReference type="ChEBI" id="CHEBI:57540"/>
        <dbReference type="ChEBI" id="CHEBI:57945"/>
        <dbReference type="ChEBI" id="CHEBI:58452"/>
        <dbReference type="EC" id="1.1.1.262"/>
    </reaction>
</comment>
<comment type="cofactor">
    <cofactor evidence="1">
        <name>Zn(2+)</name>
        <dbReference type="ChEBI" id="CHEBI:29105"/>
    </cofactor>
    <cofactor evidence="1">
        <name>Mg(2+)</name>
        <dbReference type="ChEBI" id="CHEBI:18420"/>
    </cofactor>
    <cofactor evidence="1">
        <name>Co(2+)</name>
        <dbReference type="ChEBI" id="CHEBI:48828"/>
    </cofactor>
    <text evidence="1">Binds 1 divalent metal cation per subunit. Can use ions such as Zn(2+), Mg(2+) or Co(2+).</text>
</comment>
<comment type="pathway">
    <text evidence="1">Cofactor biosynthesis; pyridoxine 5'-phosphate biosynthesis; pyridoxine 5'-phosphate from D-erythrose 4-phosphate: step 4/5.</text>
</comment>
<comment type="subunit">
    <text evidence="1">Homodimer.</text>
</comment>
<comment type="subcellular location">
    <subcellularLocation>
        <location evidence="1">Cytoplasm</location>
    </subcellularLocation>
</comment>
<comment type="miscellaneous">
    <text evidence="1">The active site is located at the dimer interface.</text>
</comment>
<comment type="similarity">
    <text evidence="1">Belongs to the PdxA family.</text>
</comment>
<organism>
    <name type="scientific">Methylorubrum extorquens (strain CM4 / NCIMB 13688)</name>
    <name type="common">Methylobacterium extorquens</name>
    <dbReference type="NCBI Taxonomy" id="440085"/>
    <lineage>
        <taxon>Bacteria</taxon>
        <taxon>Pseudomonadati</taxon>
        <taxon>Pseudomonadota</taxon>
        <taxon>Alphaproteobacteria</taxon>
        <taxon>Hyphomicrobiales</taxon>
        <taxon>Methylobacteriaceae</taxon>
        <taxon>Methylorubrum</taxon>
    </lineage>
</organism>
<name>PDXA_METC4</name>
<proteinExistence type="inferred from homology"/>
<keyword id="KW-0170">Cobalt</keyword>
<keyword id="KW-0963">Cytoplasm</keyword>
<keyword id="KW-0460">Magnesium</keyword>
<keyword id="KW-0479">Metal-binding</keyword>
<keyword id="KW-0520">NAD</keyword>
<keyword id="KW-0521">NADP</keyword>
<keyword id="KW-0560">Oxidoreductase</keyword>
<keyword id="KW-0664">Pyridoxine biosynthesis</keyword>
<keyword id="KW-0862">Zinc</keyword>
<feature type="chain" id="PRO_1000146490" description="4-hydroxythreonine-4-phosphate dehydrogenase">
    <location>
        <begin position="1"/>
        <end position="349"/>
    </location>
</feature>
<feature type="binding site" evidence="1">
    <location>
        <position position="141"/>
    </location>
    <ligand>
        <name>substrate</name>
    </ligand>
</feature>
<feature type="binding site" evidence="1">
    <location>
        <position position="142"/>
    </location>
    <ligand>
        <name>substrate</name>
    </ligand>
</feature>
<feature type="binding site" evidence="1">
    <location>
        <position position="176"/>
    </location>
    <ligand>
        <name>a divalent metal cation</name>
        <dbReference type="ChEBI" id="CHEBI:60240"/>
        <note>ligand shared between dimeric partners</note>
    </ligand>
</feature>
<feature type="binding site" evidence="1">
    <location>
        <position position="221"/>
    </location>
    <ligand>
        <name>a divalent metal cation</name>
        <dbReference type="ChEBI" id="CHEBI:60240"/>
        <note>ligand shared between dimeric partners</note>
    </ligand>
</feature>
<feature type="binding site" evidence="1">
    <location>
        <position position="276"/>
    </location>
    <ligand>
        <name>a divalent metal cation</name>
        <dbReference type="ChEBI" id="CHEBI:60240"/>
        <note>ligand shared between dimeric partners</note>
    </ligand>
</feature>
<feature type="binding site" evidence="1">
    <location>
        <position position="284"/>
    </location>
    <ligand>
        <name>substrate</name>
    </ligand>
</feature>
<feature type="binding site" evidence="1">
    <location>
        <position position="293"/>
    </location>
    <ligand>
        <name>substrate</name>
    </ligand>
</feature>
<feature type="binding site" evidence="1">
    <location>
        <position position="302"/>
    </location>
    <ligand>
        <name>substrate</name>
    </ligand>
</feature>
<accession>B7KYJ1</accession>
<protein>
    <recommendedName>
        <fullName evidence="1">4-hydroxythreonine-4-phosphate dehydrogenase</fullName>
        <ecNumber evidence="1">1.1.1.262</ecNumber>
    </recommendedName>
    <alternativeName>
        <fullName evidence="1">4-(phosphohydroxy)-L-threonine dehydrogenase</fullName>
    </alternativeName>
</protein>